<accession>Q2T9P4</accession>
<organism>
    <name type="scientific">Bos taurus</name>
    <name type="common">Bovine</name>
    <dbReference type="NCBI Taxonomy" id="9913"/>
    <lineage>
        <taxon>Eukaryota</taxon>
        <taxon>Metazoa</taxon>
        <taxon>Chordata</taxon>
        <taxon>Craniata</taxon>
        <taxon>Vertebrata</taxon>
        <taxon>Euteleostomi</taxon>
        <taxon>Mammalia</taxon>
        <taxon>Eutheria</taxon>
        <taxon>Laurasiatheria</taxon>
        <taxon>Artiodactyla</taxon>
        <taxon>Ruminantia</taxon>
        <taxon>Pecora</taxon>
        <taxon>Bovidae</taxon>
        <taxon>Bovinae</taxon>
        <taxon>Bos</taxon>
    </lineage>
</organism>
<dbReference type="EMBL" id="BC111329">
    <property type="protein sequence ID" value="AAI11330.2"/>
    <property type="molecule type" value="mRNA"/>
</dbReference>
<dbReference type="RefSeq" id="NP_001033177.2">
    <property type="nucleotide sequence ID" value="NM_001038088.3"/>
</dbReference>
<dbReference type="RefSeq" id="XP_010801905.1">
    <property type="nucleotide sequence ID" value="XM_010803603.4"/>
</dbReference>
<dbReference type="RefSeq" id="XP_059739541.1">
    <property type="nucleotide sequence ID" value="XM_059883558.1"/>
</dbReference>
<dbReference type="SMR" id="Q2T9P4"/>
<dbReference type="FunCoup" id="Q2T9P4">
    <property type="interactions" value="3382"/>
</dbReference>
<dbReference type="STRING" id="9913.ENSBTAP00000063517"/>
<dbReference type="PaxDb" id="9913-ENSBTAP00000020401"/>
<dbReference type="PeptideAtlas" id="Q2T9P4"/>
<dbReference type="GeneID" id="512427"/>
<dbReference type="KEGG" id="bta:512427"/>
<dbReference type="CTD" id="4678"/>
<dbReference type="VEuPathDB" id="HostDB:ENSBTAG00000015346"/>
<dbReference type="eggNOG" id="KOG4563">
    <property type="taxonomic scope" value="Eukaryota"/>
</dbReference>
<dbReference type="HOGENOM" id="CLU_010162_0_0_1"/>
<dbReference type="InParanoid" id="Q2T9P4"/>
<dbReference type="OMA" id="QIKWRXL"/>
<dbReference type="OrthoDB" id="5587616at2759"/>
<dbReference type="TreeFam" id="TF317297"/>
<dbReference type="Proteomes" id="UP000009136">
    <property type="component" value="Chromosome 3"/>
</dbReference>
<dbReference type="Bgee" id="ENSBTAG00000015346">
    <property type="expression patterns" value="Expressed in testis and 105 other cell types or tissues"/>
</dbReference>
<dbReference type="GO" id="GO:0005737">
    <property type="term" value="C:cytoplasm"/>
    <property type="evidence" value="ECO:0007669"/>
    <property type="project" value="UniProtKB-SubCell"/>
</dbReference>
<dbReference type="GO" id="GO:0005654">
    <property type="term" value="C:nucleoplasm"/>
    <property type="evidence" value="ECO:0000318"/>
    <property type="project" value="GO_Central"/>
</dbReference>
<dbReference type="GO" id="GO:0005634">
    <property type="term" value="C:nucleus"/>
    <property type="evidence" value="ECO:0000250"/>
    <property type="project" value="UniProtKB"/>
</dbReference>
<dbReference type="GO" id="GO:0042393">
    <property type="term" value="F:histone binding"/>
    <property type="evidence" value="ECO:0000250"/>
    <property type="project" value="UniProtKB"/>
</dbReference>
<dbReference type="GO" id="GO:0140713">
    <property type="term" value="F:histone chaperone activity"/>
    <property type="evidence" value="ECO:0000250"/>
    <property type="project" value="UniProtKB"/>
</dbReference>
<dbReference type="GO" id="GO:0001824">
    <property type="term" value="P:blastocyst development"/>
    <property type="evidence" value="ECO:0000250"/>
    <property type="project" value="UniProtKB"/>
</dbReference>
<dbReference type="GO" id="GO:0034080">
    <property type="term" value="P:CENP-A containing chromatin assembly"/>
    <property type="evidence" value="ECO:0000318"/>
    <property type="project" value="GO_Central"/>
</dbReference>
<dbReference type="GO" id="GO:0006260">
    <property type="term" value="P:DNA replication"/>
    <property type="evidence" value="ECO:0007669"/>
    <property type="project" value="UniProtKB-KW"/>
</dbReference>
<dbReference type="GO" id="GO:0006335">
    <property type="term" value="P:DNA replication-dependent chromatin assembly"/>
    <property type="evidence" value="ECO:0000250"/>
    <property type="project" value="UniProtKB"/>
</dbReference>
<dbReference type="GO" id="GO:0015031">
    <property type="term" value="P:protein transport"/>
    <property type="evidence" value="ECO:0007669"/>
    <property type="project" value="UniProtKB-KW"/>
</dbReference>
<dbReference type="FunFam" id="1.25.40.10:FF:000087">
    <property type="entry name" value="Nuclear autoantigenic sperm protein (Histone-binding)"/>
    <property type="match status" value="1"/>
</dbReference>
<dbReference type="Gene3D" id="1.25.40.10">
    <property type="entry name" value="Tetratricopeptide repeat domain"/>
    <property type="match status" value="1"/>
</dbReference>
<dbReference type="InterPro" id="IPR051730">
    <property type="entry name" value="NASP-like"/>
</dbReference>
<dbReference type="InterPro" id="IPR019544">
    <property type="entry name" value="Tetratricopeptide_SHNi-TPR_dom"/>
</dbReference>
<dbReference type="InterPro" id="IPR011990">
    <property type="entry name" value="TPR-like_helical_dom_sf"/>
</dbReference>
<dbReference type="InterPro" id="IPR019734">
    <property type="entry name" value="TPR_rpt"/>
</dbReference>
<dbReference type="PANTHER" id="PTHR15081:SF1">
    <property type="entry name" value="NUCLEAR AUTOANTIGENIC SPERM PROTEIN"/>
    <property type="match status" value="1"/>
</dbReference>
<dbReference type="PANTHER" id="PTHR15081">
    <property type="entry name" value="NUCLEAR AUTOANTIGENIC SPERM PROTEIN NASP -RELATED"/>
    <property type="match status" value="1"/>
</dbReference>
<dbReference type="Pfam" id="PF10516">
    <property type="entry name" value="SHNi-TPR"/>
    <property type="match status" value="1"/>
</dbReference>
<dbReference type="SMART" id="SM00028">
    <property type="entry name" value="TPR"/>
    <property type="match status" value="3"/>
</dbReference>
<dbReference type="SUPFAM" id="SSF48452">
    <property type="entry name" value="TPR-like"/>
    <property type="match status" value="1"/>
</dbReference>
<dbReference type="PROSITE" id="PS50005">
    <property type="entry name" value="TPR"/>
    <property type="match status" value="3"/>
</dbReference>
<dbReference type="PROSITE" id="PS50293">
    <property type="entry name" value="TPR_REGION"/>
    <property type="match status" value="2"/>
</dbReference>
<feature type="initiator methionine" description="Removed" evidence="1">
    <location>
        <position position="1"/>
    </location>
</feature>
<feature type="chain" id="PRO_0000262762" description="Nuclear autoantigenic sperm protein">
    <location>
        <begin position="2"/>
        <end position="777"/>
    </location>
</feature>
<feature type="repeat" description="TPR 1" evidence="4">
    <location>
        <begin position="44"/>
        <end position="77"/>
    </location>
</feature>
<feature type="repeat" description="TPR 2" evidence="4">
    <location>
        <begin position="531"/>
        <end position="564"/>
    </location>
</feature>
<feature type="repeat" description="TPR 3" evidence="4">
    <location>
        <begin position="573"/>
        <end position="606"/>
    </location>
</feature>
<feature type="region of interest" description="Histone-binding" evidence="1">
    <location>
        <begin position="117"/>
        <end position="128"/>
    </location>
</feature>
<feature type="region of interest" description="Disordered" evidence="5">
    <location>
        <begin position="152"/>
        <end position="496"/>
    </location>
</feature>
<feature type="region of interest" description="Histone-binding" evidence="1">
    <location>
        <begin position="211"/>
        <end position="244"/>
    </location>
</feature>
<feature type="region of interest" description="Histone-binding" evidence="1">
    <location>
        <begin position="458"/>
        <end position="501"/>
    </location>
</feature>
<feature type="region of interest" description="Disordered" evidence="5">
    <location>
        <begin position="667"/>
        <end position="777"/>
    </location>
</feature>
<feature type="coiled-coil region" evidence="3">
    <location>
        <begin position="593"/>
        <end position="648"/>
    </location>
</feature>
<feature type="short sequence motif" description="Nuclear localization signal" evidence="3">
    <location>
        <begin position="705"/>
        <end position="711"/>
    </location>
</feature>
<feature type="compositionally biased region" description="Basic and acidic residues" evidence="5">
    <location>
        <begin position="152"/>
        <end position="186"/>
    </location>
</feature>
<feature type="compositionally biased region" description="Basic and acidic residues" evidence="5">
    <location>
        <begin position="227"/>
        <end position="259"/>
    </location>
</feature>
<feature type="compositionally biased region" description="Basic and acidic residues" evidence="5">
    <location>
        <begin position="267"/>
        <end position="276"/>
    </location>
</feature>
<feature type="compositionally biased region" description="Basic and acidic residues" evidence="5">
    <location>
        <begin position="303"/>
        <end position="319"/>
    </location>
</feature>
<feature type="compositionally biased region" description="Low complexity" evidence="5">
    <location>
        <begin position="342"/>
        <end position="353"/>
    </location>
</feature>
<feature type="compositionally biased region" description="Acidic residues" evidence="5">
    <location>
        <begin position="464"/>
        <end position="474"/>
    </location>
</feature>
<feature type="compositionally biased region" description="Polar residues" evidence="5">
    <location>
        <begin position="484"/>
        <end position="493"/>
    </location>
</feature>
<feature type="compositionally biased region" description="Low complexity" evidence="5">
    <location>
        <begin position="667"/>
        <end position="681"/>
    </location>
</feature>
<feature type="compositionally biased region" description="Basic and acidic residues" evidence="5">
    <location>
        <begin position="710"/>
        <end position="728"/>
    </location>
</feature>
<feature type="modified residue" description="N-acetylalanine" evidence="1">
    <location>
        <position position="2"/>
    </location>
</feature>
<feature type="modified residue" description="N6-acetyllysine" evidence="1">
    <location>
        <position position="34"/>
    </location>
</feature>
<feature type="modified residue" description="Phosphothreonine" evidence="1">
    <location>
        <position position="124"/>
    </location>
</feature>
<feature type="modified residue" description="Phosphoserine" evidence="1">
    <location>
        <position position="128"/>
    </location>
</feature>
<feature type="modified residue" description="N6-acetyllysine" evidence="2">
    <location>
        <position position="243"/>
    </location>
</feature>
<feature type="modified residue" description="Phosphoserine" evidence="1">
    <location>
        <position position="244"/>
    </location>
</feature>
<feature type="modified residue" description="N6-acetyllysine" evidence="2">
    <location>
        <position position="285"/>
    </location>
</feature>
<feature type="modified residue" description="Phosphoserine" evidence="1">
    <location>
        <position position="312"/>
    </location>
</feature>
<feature type="modified residue" description="Phosphoserine" evidence="1">
    <location>
        <position position="399"/>
    </location>
</feature>
<feature type="modified residue" description="Phosphoserine" evidence="1">
    <location>
        <position position="411"/>
    </location>
</feature>
<feature type="modified residue" description="Phosphoserine" evidence="1">
    <location>
        <position position="440"/>
    </location>
</feature>
<feature type="modified residue" description="Phosphothreonine" evidence="1">
    <location>
        <position position="466"/>
    </location>
</feature>
<feature type="modified residue" description="Phosphoserine" evidence="1">
    <location>
        <position position="469"/>
    </location>
</feature>
<feature type="modified residue" description="Phosphoserine" evidence="1">
    <location>
        <position position="486"/>
    </location>
</feature>
<feature type="modified residue" description="Phosphoserine" evidence="1">
    <location>
        <position position="492"/>
    </location>
</feature>
<feature type="modified residue" description="Phosphoserine" evidence="1">
    <location>
        <position position="651"/>
    </location>
</feature>
<feature type="modified residue" description="Phosphothreonine" evidence="1">
    <location>
        <position position="672"/>
    </location>
</feature>
<feature type="modified residue" description="Phosphoserine" evidence="1">
    <location>
        <position position="694"/>
    </location>
</feature>
<feature type="modified residue" description="Phosphoserine" evidence="1">
    <location>
        <position position="695"/>
    </location>
</feature>
<feature type="modified residue" description="Phosphoserine" evidence="1">
    <location>
        <position position="715"/>
    </location>
</feature>
<feature type="modified residue" description="Phosphoserine" evidence="1">
    <location>
        <position position="734"/>
    </location>
</feature>
<feature type="cross-link" description="Glycyl lysine isopeptide (Lys-Gly) (interchain with G-Cter in SUMO1)" evidence="1">
    <location>
        <position position="725"/>
    </location>
</feature>
<keyword id="KW-0007">Acetylation</keyword>
<keyword id="KW-0131">Cell cycle</keyword>
<keyword id="KW-0175">Coiled coil</keyword>
<keyword id="KW-0963">Cytoplasm</keyword>
<keyword id="KW-0235">DNA replication</keyword>
<keyword id="KW-1017">Isopeptide bond</keyword>
<keyword id="KW-0539">Nucleus</keyword>
<keyword id="KW-0597">Phosphoprotein</keyword>
<keyword id="KW-0653">Protein transport</keyword>
<keyword id="KW-1185">Reference proteome</keyword>
<keyword id="KW-0677">Repeat</keyword>
<keyword id="KW-0802">TPR repeat</keyword>
<keyword id="KW-0813">Transport</keyword>
<keyword id="KW-0832">Ubl conjugation</keyword>
<evidence type="ECO:0000250" key="1">
    <source>
        <dbReference type="UniProtKB" id="P49321"/>
    </source>
</evidence>
<evidence type="ECO:0000250" key="2">
    <source>
        <dbReference type="UniProtKB" id="Q99MD9"/>
    </source>
</evidence>
<evidence type="ECO:0000255" key="3"/>
<evidence type="ECO:0000255" key="4">
    <source>
        <dbReference type="PROSITE-ProRule" id="PRU00339"/>
    </source>
</evidence>
<evidence type="ECO:0000256" key="5">
    <source>
        <dbReference type="SAM" id="MobiDB-lite"/>
    </source>
</evidence>
<evidence type="ECO:0000305" key="6"/>
<evidence type="ECO:0000312" key="7">
    <source>
        <dbReference type="EMBL" id="AAI11330.2"/>
    </source>
</evidence>
<name>NASP_BOVIN</name>
<proteinExistence type="evidence at transcript level"/>
<gene>
    <name evidence="7" type="primary">NASP</name>
</gene>
<sequence length="777" mass="83688">MAAESTATAAITAELVSADKIEEDAPAPSTSADKVESLDVDSEAKKLLGLGQKHLVMGDIPAAVNAFQEAASLLGKKYGETANECGEAFFFYGKSLLELARMENGVLGNALEGVHVEEEEGEKTEEESLVENNDNIDEEAREELREQVYDAMGEKEAQKTEDKSLVKPEMDKEQETEMEKGGREDMDIGEPAEELQEKVKSAPDQLTETTEEGKGAAAPEGLSEAEVTSKKPDQEIPGAEEGKSVSETDVQEECREKGGQGEVIVSIEEKPKEASKEQPVVTLEKQGTPVEIEAVKPVDMGGDEPKEQVAASESERGKAILEQLVGQELPSAEESPEVTTQAADASAAEAGSEVSEKPGGQDTVLPQDGAVNGLSAAGDHASTKPQTNAEGLIGTKDGSALEKVRAELVPSQETKLSVEESEAAGDGVETEVAQGATEQSPEDKVKIAANEEAQDKEEQMKEGEETEGSEEEDKENDKAEETLNDSALENKSLQENEEEEIGNLELAWDMLDLAKIIFKRQDTKEAQLYAAQAHLKLGEVSVESENYLQAVEEFQACLNLQEQYLEAHDRLLAETHYQLGLAYGYNSQYDEAVAQFSKSIEVIEKRMAVLNEQMKEAEGSPTEYEKEIEELKELLPEIREKIEDAKESQRSGNVAELALKATLVESSTSGFTPSGGSSSVSMIASRKPTDGASSSNCVTDISHLVRKKRKPEEESPRKDDAKKAKQEPEVNGGSGDTISTGTEVAENMEEEAENKAESRAAVEGTVEAGATVESTAC</sequence>
<comment type="function">
    <text evidence="1 2">Component of the histone chaperone network (By similarity). Binds and stabilizes histone H3-H4 not bound to chromatin to maintain a soluble reservoir and modulate degradation by chaperone-mediated autophagy (By similarity). Required for DNA replication, normal cell cycle progression and cell proliferation. Forms a cytoplasmic complex with HSP90 and H1 linker histones and stimulates HSP90 ATPase activity. NASP and H1 histone are subsequently released from the complex and translocate to the nucleus where the histone is released for binding to DNA.</text>
</comment>
<comment type="subunit">
    <text evidence="1 2">Binds to linker H1 histones (By similarity). Interacts with histones H2A, H2B, H3 and H4 (By similarity). Interacts with histone H3.3 (By similarity). Interacts with histones H3 and H4; NASP is a histone chaperone that stabilizes and maintains a soluble pool of histone H3-H4 dimers (By similarity). Interacts with ASF1A and ASF1B; the interaction is probably indirect and mediated by H3-H4 (By similarity). Also binds to HSP90 in the cytoplasm. This interaction stimulates binding of NASP to H1-6/H1T (By similarity).</text>
</comment>
<comment type="subcellular location">
    <subcellularLocation>
        <location evidence="2">Cytoplasm</location>
    </subcellularLocation>
    <subcellularLocation>
        <location evidence="2">Nucleus</location>
    </subcellularLocation>
</comment>
<comment type="similarity">
    <text evidence="6">Belongs to the NASP family.</text>
</comment>
<reference evidence="7" key="1">
    <citation type="submission" date="2005-12" db="EMBL/GenBank/DDBJ databases">
        <authorList>
            <consortium name="NIH - Mammalian Gene Collection (MGC) project"/>
        </authorList>
    </citation>
    <scope>NUCLEOTIDE SEQUENCE [LARGE SCALE MRNA]</scope>
    <source>
        <strain evidence="7">Crossbred X Angus</strain>
        <tissue evidence="7">Liver</tissue>
    </source>
</reference>
<protein>
    <recommendedName>
        <fullName>Nuclear autoantigenic sperm protein</fullName>
        <shortName>NASP</shortName>
    </recommendedName>
</protein>